<name>KEFB_ECOK1</name>
<protein>
    <recommendedName>
        <fullName evidence="1">Glutathione-regulated potassium-efflux system protein KefB</fullName>
    </recommendedName>
    <alternativeName>
        <fullName evidence="1">K(+)/H(+) antiporter</fullName>
    </alternativeName>
</protein>
<keyword id="KW-0050">Antiport</keyword>
<keyword id="KW-0997">Cell inner membrane</keyword>
<keyword id="KW-1003">Cell membrane</keyword>
<keyword id="KW-0406">Ion transport</keyword>
<keyword id="KW-0472">Membrane</keyword>
<keyword id="KW-0630">Potassium</keyword>
<keyword id="KW-0633">Potassium transport</keyword>
<keyword id="KW-1185">Reference proteome</keyword>
<keyword id="KW-0812">Transmembrane</keyword>
<keyword id="KW-1133">Transmembrane helix</keyword>
<keyword id="KW-0813">Transport</keyword>
<reference key="1">
    <citation type="journal article" date="2007" name="J. Bacteriol.">
        <title>The genome sequence of avian pathogenic Escherichia coli strain O1:K1:H7 shares strong similarities with human extraintestinal pathogenic E. coli genomes.</title>
        <authorList>
            <person name="Johnson T.J."/>
            <person name="Kariyawasam S."/>
            <person name="Wannemuehler Y."/>
            <person name="Mangiamele P."/>
            <person name="Johnson S.J."/>
            <person name="Doetkott C."/>
            <person name="Skyberg J.A."/>
            <person name="Lynne A.M."/>
            <person name="Johnson J.R."/>
            <person name="Nolan L.K."/>
        </authorList>
    </citation>
    <scope>NUCLEOTIDE SEQUENCE [LARGE SCALE GENOMIC DNA]</scope>
</reference>
<comment type="function">
    <text evidence="1">Pore-forming subunit of a potassium efflux system that confers protection against electrophiles. Catalyzes K(+)/H(+) antiport.</text>
</comment>
<comment type="subunit">
    <text evidence="1">Interacts with the regulatory subunit KefG.</text>
</comment>
<comment type="subcellular location">
    <subcellularLocation>
        <location evidence="1">Cell inner membrane</location>
        <topology evidence="1">Multi-pass membrane protein</topology>
    </subcellularLocation>
</comment>
<comment type="similarity">
    <text evidence="1">Belongs to the monovalent cation:proton antiporter 2 (CPA2) transporter (TC 2.A.37) family. KefB subfamily.</text>
</comment>
<feature type="chain" id="PRO_0000301531" description="Glutathione-regulated potassium-efflux system protein KefB">
    <location>
        <begin position="1"/>
        <end position="601"/>
    </location>
</feature>
<feature type="transmembrane region" description="Helical" evidence="1">
    <location>
        <begin position="4"/>
        <end position="24"/>
    </location>
</feature>
<feature type="transmembrane region" description="Helical" evidence="1">
    <location>
        <begin position="29"/>
        <end position="49"/>
    </location>
</feature>
<feature type="transmembrane region" description="Helical" evidence="1">
    <location>
        <begin position="55"/>
        <end position="75"/>
    </location>
</feature>
<feature type="transmembrane region" description="Helical" evidence="1">
    <location>
        <begin position="87"/>
        <end position="107"/>
    </location>
</feature>
<feature type="transmembrane region" description="Helical" evidence="1">
    <location>
        <begin position="115"/>
        <end position="135"/>
    </location>
</feature>
<feature type="transmembrane region" description="Helical" evidence="1">
    <location>
        <begin position="152"/>
        <end position="172"/>
    </location>
</feature>
<feature type="transmembrane region" description="Helical" evidence="1">
    <location>
        <begin position="177"/>
        <end position="197"/>
    </location>
</feature>
<feature type="transmembrane region" description="Helical" evidence="1">
    <location>
        <begin position="207"/>
        <end position="227"/>
    </location>
</feature>
<feature type="transmembrane region" description="Helical" evidence="1">
    <location>
        <begin position="230"/>
        <end position="250"/>
    </location>
</feature>
<feature type="transmembrane region" description="Helical" evidence="1">
    <location>
        <begin position="268"/>
        <end position="288"/>
    </location>
</feature>
<feature type="transmembrane region" description="Helical" evidence="1">
    <location>
        <begin position="291"/>
        <end position="311"/>
    </location>
</feature>
<feature type="transmembrane region" description="Helical" evidence="1">
    <location>
        <begin position="324"/>
        <end position="344"/>
    </location>
</feature>
<feature type="transmembrane region" description="Helical" evidence="1">
    <location>
        <begin position="356"/>
        <end position="376"/>
    </location>
</feature>
<feature type="domain" description="RCK N-terminal" evidence="2">
    <location>
        <begin position="400"/>
        <end position="519"/>
    </location>
</feature>
<sequence>MEGSDFLLAGVLFLFAAVAAVPLASRLGIGAVLGYLLAGIAIGPWGLGFISDVDEILHFSELGVVFLMFIIGLELNPSKLWQLRRSIFGVGAAQVLLSAALLAGLLMLTHFSWQAAVVGGIGLAMSSTAMALQLMREKGMNRSESGQLGFSVLLFQDLAVIPALALVPLLAGSADEHFDWMKIGMKVLAFVGMLIGGRYLLRPVFRFIAASGVREVFTAATLLLVLGSALFMDALGLSMALGTFIAGVLLAESEYRHELETAIDPFKGLLLGLFFISVGMSLNLGVLYTHLLWVVISVVVLVAVKILVLYLLARLYGVRSSERMQFAGVLSQGGEFAFVLFSTASSQRLFQGDQMALLLVTVTLSMMTTPLLMKLVDKWLSRQFNGPEEEDEKPWVNDDKPQVIVVGFGRFGQVIGRLLMANKMRITVLERDISAVNLMRKYGYKVYYGDATQVDLLRSAGAEAAESIVITCNEPEDTMKLVEICQQHFPHLHILARARGRVEAHELLQAGVTQFSRETFSSALELGRKTLVTLGMHPHQAQRAQLHFRRLDMRMLRELIPMHADTVQISRAREARRELEEIFQREMQQERRQLDGWDEFE</sequence>
<accession>A1AGN6</accession>
<dbReference type="EMBL" id="CP000468">
    <property type="protein sequence ID" value="ABJ02826.1"/>
    <property type="molecule type" value="Genomic_DNA"/>
</dbReference>
<dbReference type="RefSeq" id="WP_000399162.1">
    <property type="nucleotide sequence ID" value="NZ_CADILS010000059.1"/>
</dbReference>
<dbReference type="SMR" id="A1AGN6"/>
<dbReference type="KEGG" id="ecv:APECO1_3104"/>
<dbReference type="HOGENOM" id="CLU_005126_9_3_6"/>
<dbReference type="Proteomes" id="UP000008216">
    <property type="component" value="Chromosome"/>
</dbReference>
<dbReference type="GO" id="GO:0005886">
    <property type="term" value="C:plasma membrane"/>
    <property type="evidence" value="ECO:0007669"/>
    <property type="project" value="UniProtKB-SubCell"/>
</dbReference>
<dbReference type="GO" id="GO:0015503">
    <property type="term" value="F:glutathione-regulated potassium exporter activity"/>
    <property type="evidence" value="ECO:0007669"/>
    <property type="project" value="UniProtKB-UniRule"/>
</dbReference>
<dbReference type="GO" id="GO:1902600">
    <property type="term" value="P:proton transmembrane transport"/>
    <property type="evidence" value="ECO:0007669"/>
    <property type="project" value="InterPro"/>
</dbReference>
<dbReference type="FunFam" id="1.20.1530.20:FF:000001">
    <property type="entry name" value="Glutathione-regulated potassium-efflux system protein KefB"/>
    <property type="match status" value="1"/>
</dbReference>
<dbReference type="FunFam" id="3.40.50.720:FF:000036">
    <property type="entry name" value="Glutathione-regulated potassium-efflux system protein KefB"/>
    <property type="match status" value="1"/>
</dbReference>
<dbReference type="Gene3D" id="1.20.1530.20">
    <property type="match status" value="1"/>
</dbReference>
<dbReference type="Gene3D" id="3.40.50.720">
    <property type="entry name" value="NAD(P)-binding Rossmann-like Domain"/>
    <property type="match status" value="1"/>
</dbReference>
<dbReference type="HAMAP" id="MF_01412">
    <property type="entry name" value="K_H_efflux_KefB"/>
    <property type="match status" value="1"/>
</dbReference>
<dbReference type="InterPro" id="IPR006153">
    <property type="entry name" value="Cation/H_exchanger_TM"/>
</dbReference>
<dbReference type="InterPro" id="IPR004771">
    <property type="entry name" value="K/H_exchanger"/>
</dbReference>
<dbReference type="InterPro" id="IPR020884">
    <property type="entry name" value="K_H_efflux_KefB"/>
</dbReference>
<dbReference type="InterPro" id="IPR038770">
    <property type="entry name" value="Na+/solute_symporter_sf"/>
</dbReference>
<dbReference type="InterPro" id="IPR036291">
    <property type="entry name" value="NAD(P)-bd_dom_sf"/>
</dbReference>
<dbReference type="InterPro" id="IPR003148">
    <property type="entry name" value="RCK_N"/>
</dbReference>
<dbReference type="NCBIfam" id="TIGR00932">
    <property type="entry name" value="2a37"/>
    <property type="match status" value="1"/>
</dbReference>
<dbReference type="NCBIfam" id="NF002973">
    <property type="entry name" value="PRK03659.1"/>
    <property type="match status" value="1"/>
</dbReference>
<dbReference type="PANTHER" id="PTHR46157">
    <property type="entry name" value="K(+) EFFLUX ANTIPORTER 3, CHLOROPLASTIC"/>
    <property type="match status" value="1"/>
</dbReference>
<dbReference type="PANTHER" id="PTHR46157:SF4">
    <property type="entry name" value="K(+) EFFLUX ANTIPORTER 3, CHLOROPLASTIC"/>
    <property type="match status" value="1"/>
</dbReference>
<dbReference type="Pfam" id="PF00999">
    <property type="entry name" value="Na_H_Exchanger"/>
    <property type="match status" value="1"/>
</dbReference>
<dbReference type="Pfam" id="PF02254">
    <property type="entry name" value="TrkA_N"/>
    <property type="match status" value="1"/>
</dbReference>
<dbReference type="SUPFAM" id="SSF51735">
    <property type="entry name" value="NAD(P)-binding Rossmann-fold domains"/>
    <property type="match status" value="1"/>
</dbReference>
<dbReference type="PROSITE" id="PS51201">
    <property type="entry name" value="RCK_N"/>
    <property type="match status" value="1"/>
</dbReference>
<proteinExistence type="inferred from homology"/>
<gene>
    <name evidence="1" type="primary">kefB</name>
    <name type="ordered locus">Ecok1_33320</name>
    <name type="ORF">APECO1_3104</name>
</gene>
<organism>
    <name type="scientific">Escherichia coli O1:K1 / APEC</name>
    <dbReference type="NCBI Taxonomy" id="405955"/>
    <lineage>
        <taxon>Bacteria</taxon>
        <taxon>Pseudomonadati</taxon>
        <taxon>Pseudomonadota</taxon>
        <taxon>Gammaproteobacteria</taxon>
        <taxon>Enterobacterales</taxon>
        <taxon>Enterobacteriaceae</taxon>
        <taxon>Escherichia</taxon>
    </lineage>
</organism>
<evidence type="ECO:0000255" key="1">
    <source>
        <dbReference type="HAMAP-Rule" id="MF_01412"/>
    </source>
</evidence>
<evidence type="ECO:0000255" key="2">
    <source>
        <dbReference type="PROSITE-ProRule" id="PRU00543"/>
    </source>
</evidence>